<geneLocation type="plasmid">
    <name>sym pNGR234a</name>
</geneLocation>
<name>Y4VJ_SINFN</name>
<organism>
    <name type="scientific">Sinorhizobium fredii (strain NBRC 101917 / NGR234)</name>
    <dbReference type="NCBI Taxonomy" id="394"/>
    <lineage>
        <taxon>Bacteria</taxon>
        <taxon>Pseudomonadati</taxon>
        <taxon>Pseudomonadota</taxon>
        <taxon>Alphaproteobacteria</taxon>
        <taxon>Hyphomicrobiales</taxon>
        <taxon>Rhizobiaceae</taxon>
        <taxon>Sinorhizobium/Ensifer group</taxon>
        <taxon>Sinorhizobium</taxon>
    </lineage>
</organism>
<accession>Q53218</accession>
<comment type="similarity">
    <text evidence="1">Belongs to the bacterial luciferase oxidoreductase family.</text>
</comment>
<gene>
    <name type="ordered locus">NGR_a01140</name>
    <name type="ORF">y4vJ</name>
</gene>
<proteinExistence type="inferred from homology"/>
<dbReference type="EMBL" id="U00090">
    <property type="protein sequence ID" value="AAB91898.1"/>
    <property type="molecule type" value="Genomic_DNA"/>
</dbReference>
<dbReference type="EMBL" id="Z68203">
    <property type="protein sequence ID" value="CAA92425.1"/>
    <property type="molecule type" value="Genomic_DNA"/>
</dbReference>
<dbReference type="RefSeq" id="NP_444111.1">
    <property type="nucleotide sequence ID" value="NC_000914.2"/>
</dbReference>
<dbReference type="RefSeq" id="WP_010875152.1">
    <property type="nucleotide sequence ID" value="NC_000914.2"/>
</dbReference>
<dbReference type="SMR" id="Q53218"/>
<dbReference type="KEGG" id="rhi:NGR_a01140"/>
<dbReference type="PATRIC" id="fig|394.7.peg.99"/>
<dbReference type="eggNOG" id="COG2141">
    <property type="taxonomic scope" value="Bacteria"/>
</dbReference>
<dbReference type="HOGENOM" id="CLU_027853_3_0_5"/>
<dbReference type="OrthoDB" id="9804736at2"/>
<dbReference type="Proteomes" id="UP000001054">
    <property type="component" value="Plasmid pNGR234a"/>
</dbReference>
<dbReference type="GO" id="GO:0005829">
    <property type="term" value="C:cytosol"/>
    <property type="evidence" value="ECO:0007669"/>
    <property type="project" value="TreeGrafter"/>
</dbReference>
<dbReference type="GO" id="GO:0004497">
    <property type="term" value="F:monooxygenase activity"/>
    <property type="evidence" value="ECO:0007669"/>
    <property type="project" value="UniProtKB-KW"/>
</dbReference>
<dbReference type="GO" id="GO:0016705">
    <property type="term" value="F:oxidoreductase activity, acting on paired donors, with incorporation or reduction of molecular oxygen"/>
    <property type="evidence" value="ECO:0007669"/>
    <property type="project" value="InterPro"/>
</dbReference>
<dbReference type="Gene3D" id="3.20.20.30">
    <property type="entry name" value="Luciferase-like domain"/>
    <property type="match status" value="1"/>
</dbReference>
<dbReference type="InterPro" id="IPR050766">
    <property type="entry name" value="Bact_Lucif_Oxidored"/>
</dbReference>
<dbReference type="InterPro" id="IPR011251">
    <property type="entry name" value="Luciferase-like_dom"/>
</dbReference>
<dbReference type="InterPro" id="IPR036661">
    <property type="entry name" value="Luciferase-like_sf"/>
</dbReference>
<dbReference type="PANTHER" id="PTHR30137:SF8">
    <property type="entry name" value="BLR5498 PROTEIN"/>
    <property type="match status" value="1"/>
</dbReference>
<dbReference type="PANTHER" id="PTHR30137">
    <property type="entry name" value="LUCIFERASE-LIKE MONOOXYGENASE"/>
    <property type="match status" value="1"/>
</dbReference>
<dbReference type="Pfam" id="PF00296">
    <property type="entry name" value="Bac_luciferase"/>
    <property type="match status" value="1"/>
</dbReference>
<dbReference type="SUPFAM" id="SSF51679">
    <property type="entry name" value="Bacterial luciferase-like"/>
    <property type="match status" value="1"/>
</dbReference>
<feature type="chain" id="PRO_0000220185" description="Uncharacterized protein y4vJ">
    <location>
        <begin position="1"/>
        <end position="351"/>
    </location>
</feature>
<evidence type="ECO:0000305" key="1"/>
<reference key="1">
    <citation type="journal article" date="1997" name="Nature">
        <title>Molecular basis of symbiosis between Rhizobium and legumes.</title>
        <authorList>
            <person name="Freiberg C.A."/>
            <person name="Fellay R."/>
            <person name="Bairoch A."/>
            <person name="Broughton W.J."/>
            <person name="Rosenthal A."/>
            <person name="Perret X."/>
        </authorList>
    </citation>
    <scope>NUCLEOTIDE SEQUENCE [LARGE SCALE GENOMIC DNA]</scope>
    <source>
        <strain>NBRC 101917 / NGR234</strain>
    </source>
</reference>
<reference key="2">
    <citation type="journal article" date="2009" name="Appl. Environ. Microbiol.">
        <title>Rhizobium sp. strain NGR234 possesses a remarkable number of secretion systems.</title>
        <authorList>
            <person name="Schmeisser C."/>
            <person name="Liesegang H."/>
            <person name="Krysciak D."/>
            <person name="Bakkou N."/>
            <person name="Le Quere A."/>
            <person name="Wollherr A."/>
            <person name="Heinemeyer I."/>
            <person name="Morgenstern B."/>
            <person name="Pommerening-Roeser A."/>
            <person name="Flores M."/>
            <person name="Palacios R."/>
            <person name="Brenner S."/>
            <person name="Gottschalk G."/>
            <person name="Schmitz R.A."/>
            <person name="Broughton W.J."/>
            <person name="Perret X."/>
            <person name="Strittmatter A.W."/>
            <person name="Streit W.R."/>
        </authorList>
    </citation>
    <scope>NUCLEOTIDE SEQUENCE [LARGE SCALE GENOMIC DNA]</scope>
    <source>
        <strain>NBRC 101917 / NGR234</strain>
    </source>
</reference>
<reference key="3">
    <citation type="journal article" date="1996" name="Genome Res.">
        <title>Sequencing the 500-kb GC-rich symbiotic replicon of Rhizobium sp. NGR234 using dye terminators and a thermostable 'sequenase': a beginning.</title>
        <authorList>
            <person name="Freiberg C."/>
            <person name="Perret X."/>
            <person name="Broughton W.J."/>
            <person name="Rosenthal A."/>
        </authorList>
    </citation>
    <scope>NUCLEOTIDE SEQUENCE [GENOMIC DNA] OF 1-279</scope>
</reference>
<protein>
    <recommendedName>
        <fullName>Uncharacterized protein y4vJ</fullName>
    </recommendedName>
</protein>
<keyword id="KW-0503">Monooxygenase</keyword>
<keyword id="KW-0560">Oxidoreductase</keyword>
<keyword id="KW-0614">Plasmid</keyword>
<keyword id="KW-1185">Reference proteome</keyword>
<sequence length="351" mass="39159">MEFATFILAAQRGYHQSSASVIRNSIEQAILSEQAGFSTAWFAEHHFNNYSLVPSPLLMVAHCAGLTSTIRLGTAVCVLPLYQPQRLLAEIGFVDVVANGRLELGVGSGYQQFEFDRFGVNIDEAPAIFSECLDILLKGLKQKIFTHSGRYMQIPPTAISVRTLQKPTPPIWIATASSKTMARAYREGHNLFVTALHDGLETLGLLRGIIKTAAGSEGKEVRDSKVSLLRCCYASDDGAEINSYIDNARFQRRLSEALQQRRQQSKDGYMLEEMPTHQDLSFDTMRKNLPIGSINRVIDRLLEEIDVLKPDQIAIQTQLGDFDQKTMLRQIELWGDKIIPAVQKSLGRSEA</sequence>